<reference key="1">
    <citation type="journal article" date="2022" name="Front. Mar. Sci.">
        <title>Transcriptome sequencing of the pale anemones (Exaiptasia diaphana) revealed functional peptide gene resources of sea anemone.</title>
        <authorList>
            <person name="Fu J."/>
            <person name="He Y."/>
            <person name="Peng C."/>
            <person name="Tang T."/>
            <person name="Jin A."/>
            <person name="Liao Y."/>
            <person name="Shi Q."/>
            <person name="Gao B."/>
        </authorList>
    </citation>
    <scope>NUCLEOTIDE SEQUENCE [LARGE SCALE MRNA]</scope>
</reference>
<reference key="2">
    <citation type="journal article" date="2024" name="Mar. Drugs">
        <title>Synthesis and hypoglycemic effect of insulin from the venom of sea anemone Exaiptasia diaphana.</title>
        <authorList>
            <person name="Guo Q."/>
            <person name="Tang T."/>
            <person name="Lu J."/>
            <person name="Huang M."/>
            <person name="Zhang J."/>
            <person name="Ma L."/>
            <person name="Gao B."/>
        </authorList>
    </citation>
    <scope>3D-STRUCTURE MODELING</scope>
</reference>
<dbReference type="Proteomes" id="UP000887567">
    <property type="component" value="Unplaced"/>
</dbReference>
<dbReference type="Gene3D" id="1.10.100.10">
    <property type="entry name" value="Insulin-like"/>
    <property type="match status" value="1"/>
</dbReference>
<dbReference type="InterPro" id="IPR016179">
    <property type="entry name" value="Insulin-like"/>
</dbReference>
<dbReference type="InterPro" id="IPR036438">
    <property type="entry name" value="Insulin-like_sf"/>
</dbReference>
<dbReference type="InterPro" id="IPR016724">
    <property type="entry name" value="Insulin-rel_pep"/>
</dbReference>
<dbReference type="InterPro" id="IPR022353">
    <property type="entry name" value="Insulin_CS"/>
</dbReference>
<dbReference type="InterPro" id="IPR022352">
    <property type="entry name" value="Insulin_family"/>
</dbReference>
<dbReference type="Pfam" id="PF00049">
    <property type="entry name" value="Insulin"/>
    <property type="match status" value="1"/>
</dbReference>
<dbReference type="PIRSF" id="PIRSF018431">
    <property type="entry name" value="Molluscan_insulin_rel_peptide"/>
    <property type="match status" value="1"/>
</dbReference>
<dbReference type="PRINTS" id="PR00276">
    <property type="entry name" value="INSULINFAMLY"/>
</dbReference>
<dbReference type="SMART" id="SM00078">
    <property type="entry name" value="IlGF"/>
    <property type="match status" value="1"/>
</dbReference>
<dbReference type="SUPFAM" id="SSF56994">
    <property type="entry name" value="Insulin-like"/>
    <property type="match status" value="1"/>
</dbReference>
<accession>P0DRH9</accession>
<evidence type="ECO:0000250" key="1">
    <source>
        <dbReference type="UniProtKB" id="P01308"/>
    </source>
</evidence>
<evidence type="ECO:0000250" key="2">
    <source>
        <dbReference type="UniProtKB" id="P0DRI2"/>
    </source>
</evidence>
<evidence type="ECO:0000255" key="3"/>
<evidence type="ECO:0000303" key="4">
    <source>
    </source>
</evidence>
<evidence type="ECO:0000303" key="5">
    <source ref="1"/>
</evidence>
<evidence type="ECO:0000305" key="6"/>
<evidence type="ECO:0000305" key="7">
    <source ref="1"/>
</evidence>
<organism>
    <name type="scientific">Exaiptasia diaphana</name>
    <name type="common">Tropical sea anemone</name>
    <name type="synonym">Aiptasia pulchella</name>
    <dbReference type="NCBI Taxonomy" id="2652724"/>
    <lineage>
        <taxon>Eukaryota</taxon>
        <taxon>Metazoa</taxon>
        <taxon>Cnidaria</taxon>
        <taxon>Anthozoa</taxon>
        <taxon>Hexacorallia</taxon>
        <taxon>Actiniaria</taxon>
        <taxon>Aiptasiidae</taxon>
        <taxon>Exaiptasia</taxon>
    </lineage>
</organism>
<name>INS1_EXADI</name>
<feature type="signal peptide" evidence="3">
    <location>
        <begin position="1"/>
        <end position="24"/>
    </location>
</feature>
<feature type="propeptide" id="PRO_0000461926" evidence="7">
    <location>
        <begin position="25"/>
        <end position="45"/>
    </location>
</feature>
<feature type="chain" id="PRO_0000461927" description="ILP-Ap01 B chain" evidence="7">
    <location>
        <begin position="46"/>
        <end position="68"/>
    </location>
</feature>
<feature type="propeptide" id="PRO_0000461928" description="C peptide" evidence="7">
    <location>
        <begin position="69"/>
        <end position="97"/>
    </location>
</feature>
<feature type="chain" id="PRO_0000461929" description="ILP-Ap01 A chain" evidence="7">
    <location>
        <begin position="98"/>
        <end position="121"/>
    </location>
</feature>
<feature type="disulfide bond" description="Interchain (between B and A chains)" evidence="1">
    <location>
        <begin position="52"/>
        <end position="107"/>
    </location>
</feature>
<feature type="disulfide bond" description="Interchain (between B and A chains)" evidence="1">
    <location>
        <begin position="64"/>
        <end position="120"/>
    </location>
</feature>
<feature type="disulfide bond" evidence="1">
    <location>
        <begin position="106"/>
        <end position="111"/>
    </location>
</feature>
<sequence length="121" mass="14249">MDSFTRASLITFLILLTLTSLVFSNGCMMRGGCFKTSEDAHRLIMQVDFYICGNAIFDTFMDVCRPGPRRRKRDLRRKLGIVMDRKESHKFLRRRKRRVYDIVEECCMEGCIVEEVSEYCD</sequence>
<keyword id="KW-0119">Carbohydrate metabolism</keyword>
<keyword id="KW-1015">Disulfide bond</keyword>
<keyword id="KW-0313">Glucose metabolism</keyword>
<keyword id="KW-0372">Hormone</keyword>
<keyword id="KW-1185">Reference proteome</keyword>
<keyword id="KW-0964">Secreted</keyword>
<keyword id="KW-0732">Signal</keyword>
<comment type="function">
    <text evidence="1 2">Insulin decreases blood glucose concentration (By similarity). May have evolved to activate insulin receptors (INSR) in vertebrates. Molecular docking studies reveals unique interaction with the human insulin receptor. In vivo, insulin-like peptide injection reduces blood glucose levels in two models of zebrafish diabetes (streptozotocin- and glucose-induced). Also shorter swimming distance of zebrafish larvae, an effect which is not observed with human insulin (By similarity).</text>
</comment>
<comment type="subcellular location">
    <subcellularLocation>
        <location evidence="7">Secreted</location>
    </subcellularLocation>
</comment>
<comment type="similarity">
    <text evidence="6">Belongs to the insulin family.</text>
</comment>
<comment type="online information" name="National Center for Biotechnology Information (NCBI)">
    <link uri="https://www.ncbi.nlm.nih.gov/sra/?term=SRP303227"/>
</comment>
<proteinExistence type="inferred from homology"/>
<protein>
    <recommendedName>
        <fullName evidence="4 5">Insulin-like peptide 01</fullName>
        <shortName evidence="4 5">ILP-Ap01</shortName>
    </recommendedName>
    <component>
        <recommendedName>
            <fullName evidence="4 5">ILP-Ap01 B chain</fullName>
        </recommendedName>
    </component>
    <component>
        <recommendedName>
            <fullName evidence="4 5">ILP-Ap01 A chain</fullName>
        </recommendedName>
    </component>
</protein>